<dbReference type="EC" id="3.6.1.7"/>
<dbReference type="EMBL" id="CP000504">
    <property type="protein sequence ID" value="ABL88457.1"/>
    <property type="molecule type" value="Genomic_DNA"/>
</dbReference>
<dbReference type="RefSeq" id="WP_011763032.1">
    <property type="nucleotide sequence ID" value="NC_008701.1"/>
</dbReference>
<dbReference type="SMR" id="A1RU25"/>
<dbReference type="STRING" id="384616.Pisl_1294"/>
<dbReference type="GeneID" id="4618270"/>
<dbReference type="KEGG" id="pis:Pisl_1294"/>
<dbReference type="eggNOG" id="arCOG01674">
    <property type="taxonomic scope" value="Archaea"/>
</dbReference>
<dbReference type="HOGENOM" id="CLU_141932_3_2_2"/>
<dbReference type="OrthoDB" id="6643at2157"/>
<dbReference type="Proteomes" id="UP000002595">
    <property type="component" value="Chromosome"/>
</dbReference>
<dbReference type="GO" id="GO:0003998">
    <property type="term" value="F:acylphosphatase activity"/>
    <property type="evidence" value="ECO:0007669"/>
    <property type="project" value="UniProtKB-EC"/>
</dbReference>
<dbReference type="FunFam" id="3.30.70.100:FF:000012">
    <property type="entry name" value="Acylphosphatase"/>
    <property type="match status" value="1"/>
</dbReference>
<dbReference type="Gene3D" id="3.30.70.100">
    <property type="match status" value="1"/>
</dbReference>
<dbReference type="InterPro" id="IPR020456">
    <property type="entry name" value="Acylphosphatase"/>
</dbReference>
<dbReference type="InterPro" id="IPR001792">
    <property type="entry name" value="Acylphosphatase-like_dom"/>
</dbReference>
<dbReference type="InterPro" id="IPR036046">
    <property type="entry name" value="Acylphosphatase-like_dom_sf"/>
</dbReference>
<dbReference type="InterPro" id="IPR017968">
    <property type="entry name" value="Acylphosphatase_CS"/>
</dbReference>
<dbReference type="PANTHER" id="PTHR47268">
    <property type="entry name" value="ACYLPHOSPHATASE"/>
    <property type="match status" value="1"/>
</dbReference>
<dbReference type="PANTHER" id="PTHR47268:SF4">
    <property type="entry name" value="ACYLPHOSPHATASE"/>
    <property type="match status" value="1"/>
</dbReference>
<dbReference type="Pfam" id="PF00708">
    <property type="entry name" value="Acylphosphatase"/>
    <property type="match status" value="1"/>
</dbReference>
<dbReference type="PRINTS" id="PR00112">
    <property type="entry name" value="ACYLPHPHTASE"/>
</dbReference>
<dbReference type="SUPFAM" id="SSF54975">
    <property type="entry name" value="Acylphosphatase/BLUF domain-like"/>
    <property type="match status" value="1"/>
</dbReference>
<dbReference type="PROSITE" id="PS00150">
    <property type="entry name" value="ACYLPHOSPHATASE_1"/>
    <property type="match status" value="1"/>
</dbReference>
<dbReference type="PROSITE" id="PS51160">
    <property type="entry name" value="ACYLPHOSPHATASE_3"/>
    <property type="match status" value="1"/>
</dbReference>
<protein>
    <recommendedName>
        <fullName>Acylphosphatase</fullName>
        <ecNumber>3.6.1.7</ecNumber>
    </recommendedName>
    <alternativeName>
        <fullName>Acylphosphate phosphohydrolase</fullName>
    </alternativeName>
</protein>
<accession>A1RU25</accession>
<name>ACYP_PYRIL</name>
<proteinExistence type="inferred from homology"/>
<keyword id="KW-0378">Hydrolase</keyword>
<gene>
    <name type="primary">acyP</name>
    <name type="ordered locus">Pisl_1294</name>
</gene>
<feature type="chain" id="PRO_0000326868" description="Acylphosphatase">
    <location>
        <begin position="1"/>
        <end position="95"/>
    </location>
</feature>
<feature type="domain" description="Acylphosphatase-like" evidence="1">
    <location>
        <begin position="5"/>
        <end position="93"/>
    </location>
</feature>
<feature type="active site" evidence="1">
    <location>
        <position position="20"/>
    </location>
</feature>
<feature type="active site" evidence="1">
    <location>
        <position position="38"/>
    </location>
</feature>
<sequence>MENVRAHLYIKGKVQGVFFRQSMKEIAVRYGVRGWVRNRSDGRTVEAVLEGPRDAVAKVIEWAKVGPPGARVEEVEVDWEEYKGEFQDFRILPTV</sequence>
<reference key="1">
    <citation type="submission" date="2006-12" db="EMBL/GenBank/DDBJ databases">
        <title>Complete sequence of Pyrobaculum islandicum DSM 4184.</title>
        <authorList>
            <person name="Copeland A."/>
            <person name="Lucas S."/>
            <person name="Lapidus A."/>
            <person name="Barry K."/>
            <person name="Detter J.C."/>
            <person name="Glavina del Rio T."/>
            <person name="Dalin E."/>
            <person name="Tice H."/>
            <person name="Pitluck S."/>
            <person name="Meincke L."/>
            <person name="Brettin T."/>
            <person name="Bruce D."/>
            <person name="Han C."/>
            <person name="Tapia R."/>
            <person name="Gilna P."/>
            <person name="Schmutz J."/>
            <person name="Larimer F."/>
            <person name="Land M."/>
            <person name="Hauser L."/>
            <person name="Kyrpides N."/>
            <person name="Mikhailova N."/>
            <person name="Cozen A.E."/>
            <person name="Fitz-Gibbon S.T."/>
            <person name="House C.H."/>
            <person name="Saltikov C."/>
            <person name="Lowe T."/>
            <person name="Richardson P."/>
        </authorList>
    </citation>
    <scope>NUCLEOTIDE SEQUENCE [LARGE SCALE GENOMIC DNA]</scope>
    <source>
        <strain>DSM 4184 / JCM 9189 / GEO3</strain>
    </source>
</reference>
<evidence type="ECO:0000255" key="1">
    <source>
        <dbReference type="PROSITE-ProRule" id="PRU00520"/>
    </source>
</evidence>
<evidence type="ECO:0000305" key="2"/>
<comment type="catalytic activity">
    <reaction>
        <text>an acyl phosphate + H2O = a carboxylate + phosphate + H(+)</text>
        <dbReference type="Rhea" id="RHEA:14965"/>
        <dbReference type="ChEBI" id="CHEBI:15377"/>
        <dbReference type="ChEBI" id="CHEBI:15378"/>
        <dbReference type="ChEBI" id="CHEBI:29067"/>
        <dbReference type="ChEBI" id="CHEBI:43474"/>
        <dbReference type="ChEBI" id="CHEBI:59918"/>
        <dbReference type="EC" id="3.6.1.7"/>
    </reaction>
</comment>
<comment type="similarity">
    <text evidence="2">Belongs to the acylphosphatase family.</text>
</comment>
<organism>
    <name type="scientific">Pyrobaculum islandicum (strain DSM 4184 / JCM 9189 / GEO3)</name>
    <dbReference type="NCBI Taxonomy" id="384616"/>
    <lineage>
        <taxon>Archaea</taxon>
        <taxon>Thermoproteota</taxon>
        <taxon>Thermoprotei</taxon>
        <taxon>Thermoproteales</taxon>
        <taxon>Thermoproteaceae</taxon>
        <taxon>Pyrobaculum</taxon>
    </lineage>
</organism>